<accession>B2HWW1</accession>
<organism>
    <name type="scientific">Acinetobacter baumannii (strain ACICU)</name>
    <dbReference type="NCBI Taxonomy" id="405416"/>
    <lineage>
        <taxon>Bacteria</taxon>
        <taxon>Pseudomonadati</taxon>
        <taxon>Pseudomonadota</taxon>
        <taxon>Gammaproteobacteria</taxon>
        <taxon>Moraxellales</taxon>
        <taxon>Moraxellaceae</taxon>
        <taxon>Acinetobacter</taxon>
        <taxon>Acinetobacter calcoaceticus/baumannii complex</taxon>
    </lineage>
</organism>
<gene>
    <name type="ordered locus">ACICU_02858</name>
</gene>
<reference key="1">
    <citation type="journal article" date="2008" name="Antimicrob. Agents Chemother.">
        <title>Whole-genome pyrosequencing of an epidemic multidrug-resistant Acinetobacter baumannii strain belonging to the European clone II group.</title>
        <authorList>
            <person name="Iacono M."/>
            <person name="Villa L."/>
            <person name="Fortini D."/>
            <person name="Bordoni R."/>
            <person name="Imperi F."/>
            <person name="Bonnal R.J."/>
            <person name="Sicheritz-Ponten T."/>
            <person name="De Bellis G."/>
            <person name="Visca P."/>
            <person name="Cassone A."/>
            <person name="Carattoli A."/>
        </authorList>
    </citation>
    <scope>NUCLEOTIDE SEQUENCE [LARGE SCALE GENOMIC DNA]</scope>
    <source>
        <strain>ACICU</strain>
    </source>
</reference>
<comment type="similarity">
    <text evidence="1">Belongs to the UPF0178 family.</text>
</comment>
<dbReference type="EMBL" id="CP000863">
    <property type="protein sequence ID" value="ACC58170.1"/>
    <property type="molecule type" value="Genomic_DNA"/>
</dbReference>
<dbReference type="KEGG" id="abc:ACICU_02858"/>
<dbReference type="HOGENOM" id="CLU_106619_2_1_6"/>
<dbReference type="Proteomes" id="UP000008839">
    <property type="component" value="Chromosome"/>
</dbReference>
<dbReference type="CDD" id="cd18720">
    <property type="entry name" value="PIN_YqxD-like"/>
    <property type="match status" value="1"/>
</dbReference>
<dbReference type="HAMAP" id="MF_00489">
    <property type="entry name" value="UPF0178"/>
    <property type="match status" value="1"/>
</dbReference>
<dbReference type="InterPro" id="IPR003791">
    <property type="entry name" value="UPF0178"/>
</dbReference>
<dbReference type="NCBIfam" id="NF001095">
    <property type="entry name" value="PRK00124.1"/>
    <property type="match status" value="1"/>
</dbReference>
<dbReference type="PANTHER" id="PTHR35146">
    <property type="entry name" value="UPF0178 PROTEIN YAII"/>
    <property type="match status" value="1"/>
</dbReference>
<dbReference type="PANTHER" id="PTHR35146:SF1">
    <property type="entry name" value="UPF0178 PROTEIN YAII"/>
    <property type="match status" value="1"/>
</dbReference>
<dbReference type="Pfam" id="PF02639">
    <property type="entry name" value="DUF188"/>
    <property type="match status" value="1"/>
</dbReference>
<proteinExistence type="inferred from homology"/>
<protein>
    <recommendedName>
        <fullName evidence="1">UPF0178 protein ACICU_02858</fullName>
    </recommendedName>
</protein>
<name>Y2858_ACIBC</name>
<feature type="chain" id="PRO_1000126165" description="UPF0178 protein ACICU_02858">
    <location>
        <begin position="1"/>
        <end position="155"/>
    </location>
</feature>
<feature type="region of interest" description="Disordered" evidence="2">
    <location>
        <begin position="120"/>
        <end position="155"/>
    </location>
</feature>
<evidence type="ECO:0000255" key="1">
    <source>
        <dbReference type="HAMAP-Rule" id="MF_00489"/>
    </source>
</evidence>
<evidence type="ECO:0000256" key="2">
    <source>
        <dbReference type="SAM" id="MobiDB-lite"/>
    </source>
</evidence>
<sequence>MLPFKLWVDADALPKILREVILRASDRYQLEVIFVANQNVGITPSVRIKSLQVLSGADQADQEIVNRMSENDIVITQDIPLAAQVIEKGGIAIHPRGEVYTTANVKARLHLRDFMDTLRGAGVQTGGPPPISERDKREFSSALDQTILKQKRKTA</sequence>